<proteinExistence type="evidence at protein level"/>
<reference evidence="3" key="1">
    <citation type="journal article" date="2008" name="Toxicon">
        <title>Mass spectrometry analysis, amino acid sequence and biological activity of venom components from the Brazilian scorpion Opisthacanthus cayaporum.</title>
        <authorList>
            <person name="Schwartz E.F."/>
            <person name="Camargos T.S."/>
            <person name="Zamudio F.Z."/>
            <person name="Silva L.P."/>
            <person name="Bloch C. Jr."/>
            <person name="Caixeta F."/>
            <person name="Schwartz C.A."/>
            <person name="Possani L.D."/>
        </authorList>
    </citation>
    <scope>PROTEIN SEQUENCE</scope>
    <scope>SUBCELLULAR LOCATION</scope>
    <scope>TISSUE SPECIFICITY</scope>
    <scope>MASS SPECTROMETRY</scope>
    <source>
        <tissue evidence="1">Venom</tissue>
    </source>
</reference>
<feature type="peptide" id="PRO_0000398140" description="Venom peptide Ocy4" evidence="1">
    <location>
        <begin position="1"/>
        <end position="21" status="greater than"/>
    </location>
</feature>
<feature type="non-terminal residue" evidence="2">
    <location>
        <position position="21"/>
    </location>
</feature>
<dbReference type="GO" id="GO:0005576">
    <property type="term" value="C:extracellular region"/>
    <property type="evidence" value="ECO:0007669"/>
    <property type="project" value="UniProtKB-SubCell"/>
</dbReference>
<keyword id="KW-0903">Direct protein sequencing</keyword>
<keyword id="KW-0964">Secreted</keyword>
<evidence type="ECO:0000269" key="1">
    <source>
    </source>
</evidence>
<evidence type="ECO:0000303" key="2">
    <source>
    </source>
</evidence>
<evidence type="ECO:0000305" key="3"/>
<organism>
    <name type="scientific">Opisthacanthus cayaporum</name>
    <name type="common">South American scorpion</name>
    <dbReference type="NCBI Taxonomy" id="573324"/>
    <lineage>
        <taxon>Eukaryota</taxon>
        <taxon>Metazoa</taxon>
        <taxon>Ecdysozoa</taxon>
        <taxon>Arthropoda</taxon>
        <taxon>Chelicerata</taxon>
        <taxon>Arachnida</taxon>
        <taxon>Scorpiones</taxon>
        <taxon>Iurida</taxon>
        <taxon>Scorpionoidea</taxon>
        <taxon>Hemiscorpiidae</taxon>
        <taxon>Opisthacanthus</taxon>
    </lineage>
</organism>
<sequence length="21" mass="2528">NRTFKTNTKCHVKNQCNFLCQ</sequence>
<name>VP04_OPICY</name>
<accession>P86109</accession>
<protein>
    <recommendedName>
        <fullName>Venom peptide Ocy4</fullName>
    </recommendedName>
</protein>
<comment type="subcellular location">
    <subcellularLocation>
        <location evidence="1">Secreted</location>
    </subcellularLocation>
</comment>
<comment type="tissue specificity">
    <text evidence="1">Expressed by the venom gland.</text>
</comment>
<comment type="mass spectrometry" mass="5093.0" method="MALDI" evidence="1"/>